<accession>Q9K0I2</accession>
<name>PPSA_NEIMB</name>
<dbReference type="EC" id="2.7.9.2"/>
<dbReference type="EMBL" id="AE002098">
    <property type="protein sequence ID" value="AAF41044.1"/>
    <property type="molecule type" value="Genomic_DNA"/>
</dbReference>
<dbReference type="PIR" id="G81177">
    <property type="entry name" value="G81177"/>
</dbReference>
<dbReference type="RefSeq" id="NP_273662.1">
    <property type="nucleotide sequence ID" value="NC_003112.2"/>
</dbReference>
<dbReference type="RefSeq" id="WP_002222834.1">
    <property type="nucleotide sequence ID" value="NC_003112.2"/>
</dbReference>
<dbReference type="PDB" id="2OLS">
    <property type="method" value="X-ray"/>
    <property type="resolution" value="2.40 A"/>
    <property type="chains" value="A=1-794"/>
</dbReference>
<dbReference type="PDBsum" id="2OLS"/>
<dbReference type="SMR" id="Q9K0I2"/>
<dbReference type="FunCoup" id="Q9K0I2">
    <property type="interactions" value="223"/>
</dbReference>
<dbReference type="STRING" id="122586.NMB0618"/>
<dbReference type="PaxDb" id="122586-NMB0618"/>
<dbReference type="KEGG" id="nme:NMB0618"/>
<dbReference type="PATRIC" id="fig|122586.8.peg.782"/>
<dbReference type="HOGENOM" id="CLU_007308_6_2_4"/>
<dbReference type="InParanoid" id="Q9K0I2"/>
<dbReference type="OrthoDB" id="9765468at2"/>
<dbReference type="UniPathway" id="UPA00138"/>
<dbReference type="EvolutionaryTrace" id="Q9K0I2"/>
<dbReference type="Proteomes" id="UP000000425">
    <property type="component" value="Chromosome"/>
</dbReference>
<dbReference type="GO" id="GO:0005524">
    <property type="term" value="F:ATP binding"/>
    <property type="evidence" value="ECO:0007669"/>
    <property type="project" value="UniProtKB-KW"/>
</dbReference>
<dbReference type="GO" id="GO:0046872">
    <property type="term" value="F:metal ion binding"/>
    <property type="evidence" value="ECO:0007669"/>
    <property type="project" value="UniProtKB-KW"/>
</dbReference>
<dbReference type="GO" id="GO:0008986">
    <property type="term" value="F:pyruvate, water dikinase activity"/>
    <property type="evidence" value="ECO:0007669"/>
    <property type="project" value="UniProtKB-EC"/>
</dbReference>
<dbReference type="GO" id="GO:0006094">
    <property type="term" value="P:gluconeogenesis"/>
    <property type="evidence" value="ECO:0007669"/>
    <property type="project" value="UniProtKB-UniPathway"/>
</dbReference>
<dbReference type="FunFam" id="3.20.20.60:FF:000010">
    <property type="entry name" value="Phosphoenolpyruvate synthase"/>
    <property type="match status" value="1"/>
</dbReference>
<dbReference type="FunFam" id="3.30.1490.20:FF:000010">
    <property type="entry name" value="Phosphoenolpyruvate synthase"/>
    <property type="match status" value="1"/>
</dbReference>
<dbReference type="FunFam" id="3.30.470.20:FF:000017">
    <property type="entry name" value="Phosphoenolpyruvate synthase"/>
    <property type="match status" value="1"/>
</dbReference>
<dbReference type="FunFam" id="3.50.30.10:FF:000002">
    <property type="entry name" value="Phosphoenolpyruvate synthase"/>
    <property type="match status" value="1"/>
</dbReference>
<dbReference type="Gene3D" id="3.30.1490.20">
    <property type="entry name" value="ATP-grasp fold, A domain"/>
    <property type="match status" value="1"/>
</dbReference>
<dbReference type="Gene3D" id="3.30.470.20">
    <property type="entry name" value="ATP-grasp fold, B domain"/>
    <property type="match status" value="1"/>
</dbReference>
<dbReference type="Gene3D" id="3.20.20.60">
    <property type="entry name" value="Phosphoenolpyruvate-binding domains"/>
    <property type="match status" value="1"/>
</dbReference>
<dbReference type="Gene3D" id="3.50.30.10">
    <property type="entry name" value="Phosphohistidine domain"/>
    <property type="match status" value="1"/>
</dbReference>
<dbReference type="InterPro" id="IPR013815">
    <property type="entry name" value="ATP_grasp_subdomain_1"/>
</dbReference>
<dbReference type="InterPro" id="IPR008279">
    <property type="entry name" value="PEP-util_enz_mobile_dom"/>
</dbReference>
<dbReference type="InterPro" id="IPR006319">
    <property type="entry name" value="PEP_synth"/>
</dbReference>
<dbReference type="InterPro" id="IPR018274">
    <property type="entry name" value="PEP_util_AS"/>
</dbReference>
<dbReference type="InterPro" id="IPR000121">
    <property type="entry name" value="PEP_util_C"/>
</dbReference>
<dbReference type="InterPro" id="IPR023151">
    <property type="entry name" value="PEP_util_CS"/>
</dbReference>
<dbReference type="InterPro" id="IPR036637">
    <property type="entry name" value="Phosphohistidine_dom_sf"/>
</dbReference>
<dbReference type="InterPro" id="IPR002192">
    <property type="entry name" value="PPDK_AMP/ATP-bd"/>
</dbReference>
<dbReference type="InterPro" id="IPR015813">
    <property type="entry name" value="Pyrv/PenolPyrv_kinase-like_dom"/>
</dbReference>
<dbReference type="InterPro" id="IPR040442">
    <property type="entry name" value="Pyrv_kinase-like_dom_sf"/>
</dbReference>
<dbReference type="NCBIfam" id="TIGR01418">
    <property type="entry name" value="PEP_synth"/>
    <property type="match status" value="1"/>
</dbReference>
<dbReference type="NCBIfam" id="NF005057">
    <property type="entry name" value="PRK06464.1"/>
    <property type="match status" value="1"/>
</dbReference>
<dbReference type="PANTHER" id="PTHR43030">
    <property type="entry name" value="PHOSPHOENOLPYRUVATE SYNTHASE"/>
    <property type="match status" value="1"/>
</dbReference>
<dbReference type="PANTHER" id="PTHR43030:SF1">
    <property type="entry name" value="PHOSPHOENOLPYRUVATE SYNTHASE"/>
    <property type="match status" value="1"/>
</dbReference>
<dbReference type="Pfam" id="PF00391">
    <property type="entry name" value="PEP-utilizers"/>
    <property type="match status" value="1"/>
</dbReference>
<dbReference type="Pfam" id="PF02896">
    <property type="entry name" value="PEP-utilizers_C"/>
    <property type="match status" value="1"/>
</dbReference>
<dbReference type="Pfam" id="PF01326">
    <property type="entry name" value="PPDK_N"/>
    <property type="match status" value="1"/>
</dbReference>
<dbReference type="PIRSF" id="PIRSF000854">
    <property type="entry name" value="PEP_synthase"/>
    <property type="match status" value="1"/>
</dbReference>
<dbReference type="SUPFAM" id="SSF56059">
    <property type="entry name" value="Glutathione synthetase ATP-binding domain-like"/>
    <property type="match status" value="1"/>
</dbReference>
<dbReference type="SUPFAM" id="SSF51621">
    <property type="entry name" value="Phosphoenolpyruvate/pyruvate domain"/>
    <property type="match status" value="1"/>
</dbReference>
<dbReference type="SUPFAM" id="SSF52009">
    <property type="entry name" value="Phosphohistidine domain"/>
    <property type="match status" value="1"/>
</dbReference>
<dbReference type="PROSITE" id="PS00742">
    <property type="entry name" value="PEP_ENZYMES_2"/>
    <property type="match status" value="1"/>
</dbReference>
<dbReference type="PROSITE" id="PS00370">
    <property type="entry name" value="PEP_ENZYMES_PHOS_SITE"/>
    <property type="match status" value="1"/>
</dbReference>
<keyword id="KW-0002">3D-structure</keyword>
<keyword id="KW-0067">ATP-binding</keyword>
<keyword id="KW-0418">Kinase</keyword>
<keyword id="KW-0460">Magnesium</keyword>
<keyword id="KW-0479">Metal-binding</keyword>
<keyword id="KW-0547">Nucleotide-binding</keyword>
<keyword id="KW-1185">Reference proteome</keyword>
<keyword id="KW-0808">Transferase</keyword>
<comment type="function">
    <text evidence="1">Catalyzes the phosphorylation of pyruvate to phosphoenolpyruvate.</text>
</comment>
<comment type="catalytic activity">
    <reaction>
        <text>pyruvate + ATP + H2O = phosphoenolpyruvate + AMP + phosphate + 2 H(+)</text>
        <dbReference type="Rhea" id="RHEA:11364"/>
        <dbReference type="ChEBI" id="CHEBI:15361"/>
        <dbReference type="ChEBI" id="CHEBI:15377"/>
        <dbReference type="ChEBI" id="CHEBI:15378"/>
        <dbReference type="ChEBI" id="CHEBI:30616"/>
        <dbReference type="ChEBI" id="CHEBI:43474"/>
        <dbReference type="ChEBI" id="CHEBI:58702"/>
        <dbReference type="ChEBI" id="CHEBI:456215"/>
        <dbReference type="EC" id="2.7.9.2"/>
    </reaction>
</comment>
<comment type="cofactor">
    <cofactor evidence="1">
        <name>Mg(2+)</name>
        <dbReference type="ChEBI" id="CHEBI:18420"/>
    </cofactor>
</comment>
<comment type="pathway">
    <text>Carbohydrate biosynthesis; gluconeogenesis.</text>
</comment>
<comment type="domain">
    <text evidence="1">The N-terminal domain contains the ATP/Pi binding site, the central domain the pyrophosphate/phosphate carrier histidine, and the C-terminal domain the pyruvate binding site.</text>
</comment>
<comment type="miscellaneous">
    <text>Present in outer membrane vesicle formulations which are used as vaccines in human.</text>
</comment>
<comment type="miscellaneous">
    <text evidence="1">The reaction takes place in three steps, mediated by a phosphocarrier histidine residue located on the surface of the central domain. The two first partial reactions are catalyzed at an active site located on the N-terminal domain, and the third partial reaction is catalyzed at an active site located on the C-terminal domain. For catalytic turnover, the central domain swivels from the concave surface of the N-terminal domain to that of the C-terminal domain (By similarity).</text>
</comment>
<comment type="similarity">
    <text evidence="2">Belongs to the PEP-utilizing enzyme family.</text>
</comment>
<proteinExistence type="evidence at protein level"/>
<organism>
    <name type="scientific">Neisseria meningitidis serogroup B (strain ATCC BAA-335 / MC58)</name>
    <dbReference type="NCBI Taxonomy" id="122586"/>
    <lineage>
        <taxon>Bacteria</taxon>
        <taxon>Pseudomonadati</taxon>
        <taxon>Pseudomonadota</taxon>
        <taxon>Betaproteobacteria</taxon>
        <taxon>Neisseriales</taxon>
        <taxon>Neisseriaceae</taxon>
        <taxon>Neisseria</taxon>
    </lineage>
</organism>
<feature type="chain" id="PRO_0000320270" description="Phosphoenolpyruvate synthase">
    <location>
        <begin position="1"/>
        <end position="794"/>
    </location>
</feature>
<feature type="active site" description="Tele-phosphohistidine intermediate" evidence="1">
    <location>
        <position position="422"/>
    </location>
</feature>
<feature type="active site" description="Proton donor" evidence="1">
    <location>
        <position position="752"/>
    </location>
</feature>
<feature type="binding site" evidence="1">
    <location>
        <position position="512"/>
    </location>
    <ligand>
        <name>substrate</name>
    </ligand>
</feature>
<feature type="binding site" evidence="1">
    <location>
        <position position="579"/>
    </location>
    <ligand>
        <name>substrate</name>
    </ligand>
</feature>
<feature type="binding site" evidence="1">
    <location>
        <position position="681"/>
    </location>
    <ligand>
        <name>Mg(2+)</name>
        <dbReference type="ChEBI" id="CHEBI:18420"/>
    </ligand>
</feature>
<feature type="binding site" evidence="1">
    <location>
        <position position="681"/>
    </location>
    <ligand>
        <name>substrate</name>
    </ligand>
</feature>
<feature type="binding site" evidence="1">
    <location>
        <position position="702"/>
    </location>
    <ligand>
        <name>substrate</name>
    </ligand>
</feature>
<feature type="binding site" evidence="1">
    <location>
        <position position="703"/>
    </location>
    <ligand>
        <name>substrate</name>
    </ligand>
</feature>
<feature type="binding site" evidence="1">
    <location>
        <position position="704"/>
    </location>
    <ligand>
        <name>substrate</name>
    </ligand>
</feature>
<feature type="binding site" evidence="1">
    <location>
        <position position="705"/>
    </location>
    <ligand>
        <name>Mg(2+)</name>
        <dbReference type="ChEBI" id="CHEBI:18420"/>
    </ligand>
</feature>
<feature type="binding site" evidence="1">
    <location>
        <position position="705"/>
    </location>
    <ligand>
        <name>substrate</name>
    </ligand>
</feature>
<feature type="strand" evidence="3">
    <location>
        <begin position="6"/>
        <end position="8"/>
    </location>
</feature>
<feature type="helix" evidence="3">
    <location>
        <begin position="9"/>
        <end position="11"/>
    </location>
</feature>
<feature type="helix" evidence="3">
    <location>
        <begin position="14"/>
        <end position="16"/>
    </location>
</feature>
<feature type="helix" evidence="3">
    <location>
        <begin position="17"/>
        <end position="34"/>
    </location>
</feature>
<feature type="helix" evidence="3">
    <location>
        <begin position="35"/>
        <end position="37"/>
    </location>
</feature>
<feature type="strand" evidence="3">
    <location>
        <begin position="44"/>
        <end position="47"/>
    </location>
</feature>
<feature type="helix" evidence="3">
    <location>
        <begin position="49"/>
        <end position="56"/>
    </location>
</feature>
<feature type="helix" evidence="3">
    <location>
        <begin position="58"/>
        <end position="60"/>
    </location>
</feature>
<feature type="helix" evidence="3">
    <location>
        <begin position="61"/>
        <end position="70"/>
    </location>
</feature>
<feature type="helix" evidence="3">
    <location>
        <begin position="77"/>
        <end position="92"/>
    </location>
</feature>
<feature type="helix" evidence="3">
    <location>
        <begin position="98"/>
        <end position="114"/>
    </location>
</feature>
<feature type="strand" evidence="3">
    <location>
        <begin position="122"/>
        <end position="128"/>
    </location>
</feature>
<feature type="strand" evidence="3">
    <location>
        <begin position="144"/>
        <end position="148"/>
    </location>
</feature>
<feature type="helix" evidence="3">
    <location>
        <begin position="151"/>
        <end position="164"/>
    </location>
</feature>
<feature type="helix" evidence="3">
    <location>
        <begin position="168"/>
        <end position="177"/>
    </location>
</feature>
<feature type="strand" evidence="3">
    <location>
        <begin position="186"/>
        <end position="192"/>
    </location>
</feature>
<feature type="strand" evidence="3">
    <location>
        <begin position="198"/>
        <end position="207"/>
    </location>
</feature>
<feature type="turn" evidence="3">
    <location>
        <begin position="209"/>
        <end position="211"/>
    </location>
</feature>
<feature type="strand" evidence="3">
    <location>
        <begin position="215"/>
        <end position="224"/>
    </location>
</feature>
<feature type="helix" evidence="3">
    <location>
        <begin position="227"/>
        <end position="230"/>
    </location>
</feature>
<feature type="strand" evidence="3">
    <location>
        <begin position="237"/>
        <end position="242"/>
    </location>
</feature>
<feature type="helix" evidence="3">
    <location>
        <begin position="243"/>
        <end position="247"/>
    </location>
</feature>
<feature type="strand" evidence="3">
    <location>
        <begin position="253"/>
        <end position="257"/>
    </location>
</feature>
<feature type="strand" evidence="3">
    <location>
        <begin position="263"/>
        <end position="267"/>
    </location>
</feature>
<feature type="strand" evidence="3">
    <location>
        <begin position="272"/>
        <end position="274"/>
    </location>
</feature>
<feature type="strand" evidence="3">
    <location>
        <begin position="277"/>
        <end position="281"/>
    </location>
</feature>
<feature type="helix" evidence="3">
    <location>
        <begin position="284"/>
        <end position="287"/>
    </location>
</feature>
<feature type="helix" evidence="3">
    <location>
        <begin position="294"/>
        <end position="311"/>
    </location>
</feature>
<feature type="strand" evidence="3">
    <location>
        <begin position="315"/>
        <end position="321"/>
    </location>
</feature>
<feature type="turn" evidence="3">
    <location>
        <begin position="323"/>
        <end position="325"/>
    </location>
</feature>
<feature type="strand" evidence="3">
    <location>
        <begin position="328"/>
        <end position="335"/>
    </location>
</feature>
<feature type="strand" evidence="3">
    <location>
        <begin position="392"/>
        <end position="396"/>
    </location>
</feature>
<feature type="helix" evidence="3">
    <location>
        <begin position="400"/>
        <end position="402"/>
    </location>
</feature>
<feature type="helix" evidence="3">
    <location>
        <begin position="404"/>
        <end position="407"/>
    </location>
</feature>
<feature type="strand" evidence="3">
    <location>
        <begin position="410"/>
        <end position="416"/>
    </location>
</feature>
<feature type="helix" evidence="3">
    <location>
        <begin position="422"/>
        <end position="426"/>
    </location>
</feature>
<feature type="strand" evidence="3">
    <location>
        <begin position="434"/>
        <end position="436"/>
    </location>
</feature>
<feature type="helix" evidence="3">
    <location>
        <begin position="441"/>
        <end position="444"/>
    </location>
</feature>
<feature type="strand" evidence="3">
    <location>
        <begin position="484"/>
        <end position="491"/>
    </location>
</feature>
<feature type="helix" evidence="3">
    <location>
        <begin position="494"/>
        <end position="496"/>
    </location>
</feature>
<feature type="helix" evidence="3">
    <location>
        <begin position="497"/>
        <end position="501"/>
    </location>
</feature>
<feature type="strand" evidence="3">
    <location>
        <begin position="506"/>
        <end position="511"/>
    </location>
</feature>
<feature type="helix" evidence="3">
    <location>
        <begin position="514"/>
        <end position="519"/>
    </location>
</feature>
<feature type="helix" evidence="3">
    <location>
        <begin position="525"/>
        <end position="529"/>
    </location>
</feature>
<feature type="helix" evidence="3">
    <location>
        <begin position="531"/>
        <end position="533"/>
    </location>
</feature>
<feature type="helix" evidence="3">
    <location>
        <begin position="536"/>
        <end position="545"/>
    </location>
</feature>
<feature type="turn" evidence="3">
    <location>
        <begin position="546"/>
        <end position="548"/>
    </location>
</feature>
<feature type="strand" evidence="3">
    <location>
        <begin position="549"/>
        <end position="551"/>
    </location>
</feature>
<feature type="helix" evidence="3">
    <location>
        <begin position="552"/>
        <end position="571"/>
    </location>
</feature>
<feature type="strand" evidence="3">
    <location>
        <begin position="574"/>
        <end position="579"/>
    </location>
</feature>
<feature type="helix" evidence="3">
    <location>
        <begin position="585"/>
        <end position="589"/>
    </location>
</feature>
<feature type="helix" evidence="3">
    <location>
        <begin position="595"/>
        <end position="597"/>
    </location>
</feature>
<feature type="helix" evidence="3">
    <location>
        <begin position="604"/>
        <end position="606"/>
    </location>
</feature>
<feature type="helix" evidence="3">
    <location>
        <begin position="611"/>
        <end position="615"/>
    </location>
</feature>
<feature type="turn" evidence="3">
    <location>
        <begin position="617"/>
        <end position="619"/>
    </location>
</feature>
<feature type="helix" evidence="3">
    <location>
        <begin position="620"/>
        <end position="635"/>
    </location>
</feature>
<feature type="strand" evidence="3">
    <location>
        <begin position="642"/>
        <end position="646"/>
    </location>
</feature>
<feature type="helix" evidence="3">
    <location>
        <begin position="652"/>
        <end position="664"/>
    </location>
</feature>
<feature type="helix" evidence="3">
    <location>
        <begin position="671"/>
        <end position="673"/>
    </location>
</feature>
<feature type="strand" evidence="3">
    <location>
        <begin position="676"/>
        <end position="680"/>
    </location>
</feature>
<feature type="helix" evidence="3">
    <location>
        <begin position="683"/>
        <end position="687"/>
    </location>
</feature>
<feature type="helix" evidence="3">
    <location>
        <begin position="689"/>
        <end position="693"/>
    </location>
</feature>
<feature type="strand" evidence="3">
    <location>
        <begin position="696"/>
        <end position="702"/>
    </location>
</feature>
<feature type="helix" evidence="3">
    <location>
        <begin position="703"/>
        <end position="711"/>
    </location>
</feature>
<feature type="turn" evidence="3">
    <location>
        <begin position="718"/>
        <end position="720"/>
    </location>
</feature>
<feature type="helix" evidence="3">
    <location>
        <begin position="721"/>
        <end position="723"/>
    </location>
</feature>
<feature type="helix" evidence="3">
    <location>
        <begin position="729"/>
        <end position="743"/>
    </location>
</feature>
<feature type="turn" evidence="3">
    <location>
        <begin position="744"/>
        <end position="746"/>
    </location>
</feature>
<feature type="strand" evidence="3">
    <location>
        <begin position="748"/>
        <end position="754"/>
    </location>
</feature>
<feature type="helix" evidence="3">
    <location>
        <begin position="755"/>
        <end position="758"/>
    </location>
</feature>
<feature type="helix" evidence="3">
    <location>
        <begin position="760"/>
        <end position="769"/>
    </location>
</feature>
<feature type="strand" evidence="3">
    <location>
        <begin position="773"/>
        <end position="776"/>
    </location>
</feature>
<feature type="helix" evidence="3">
    <location>
        <begin position="778"/>
        <end position="780"/>
    </location>
</feature>
<feature type="helix" evidence="3">
    <location>
        <begin position="781"/>
        <end position="791"/>
    </location>
</feature>
<sequence>MADNYVIWFENLRMTDVERVGGKNASLGEMISQLTEKGVRVPGGFATTAEAYRAFLAHNGLSERISAALAKLDVEDVAELARVGKEIRQWILDTPFPEQLDAEIEAAWNKMVADAGGADISVAVRSSATAEDLPDASFAGQQETFLNINGLDNVKEAMHHVFASLYNDRAISYRVHKGFEHDIVALSAGVQRMVRSDSGASGVMFTLDTESGYDQVVFVTSSYGLGENVVQGAVNPDEFYVFKPTLKAGKPAILRKTMGSKHIKMIFTDKAEAGKSVTNVDVPEEDRNRFSITDEEITELAHYALTIEKHYGRPMDIEWGRDGLDGKLYILQARPETVKSQEEGNRNLRRFAINGDKTVLCEGRAIGQKVGQGKVRLIKDASEMDSVEAGDVLVTDMTDPDWEPVMKRASAIVTNRGGRTCHAAIIARELGIPAVVGCGNATELLKNGQEVTVSCAEGDTGFIYAGLLDVQITDVALDNMPKAPVKVMMNVGNPELAFSFANLPSEGIGLARMEFIINRQIGIHPKALLEFDKQDDELKAEITRRIAGYASPVDFYVDKIAEGVATLAASVYPRKTIVRMSDFKSNEYANLVGGNVYEPHEENPMLGFRGAARYVADNFKDCFALECKALKRVRDEMGLTNVEIMIPFVRTLGEAEAVVKALKENGLERGKNGLRLIMMCELPSNAVLAEQFLQYFDGFSIGSNDMTQLTLGLDRDSGLVSESFDERNPAVKVMLHLAISACRKQNKYVGICGQGPSDHPDFAKWLVEEGIESVSLNPDTVIETWLYLANELNK</sequence>
<reference key="1">
    <citation type="journal article" date="2000" name="Science">
        <title>Complete genome sequence of Neisseria meningitidis serogroup B strain MC58.</title>
        <authorList>
            <person name="Tettelin H."/>
            <person name="Saunders N.J."/>
            <person name="Heidelberg J.F."/>
            <person name="Jeffries A.C."/>
            <person name="Nelson K.E."/>
            <person name="Eisen J.A."/>
            <person name="Ketchum K.A."/>
            <person name="Hood D.W."/>
            <person name="Peden J.F."/>
            <person name="Dodson R.J."/>
            <person name="Nelson W.C."/>
            <person name="Gwinn M.L."/>
            <person name="DeBoy R.T."/>
            <person name="Peterson J.D."/>
            <person name="Hickey E.K."/>
            <person name="Haft D.H."/>
            <person name="Salzberg S.L."/>
            <person name="White O."/>
            <person name="Fleischmann R.D."/>
            <person name="Dougherty B.A."/>
            <person name="Mason T.M."/>
            <person name="Ciecko A."/>
            <person name="Parksey D.S."/>
            <person name="Blair E."/>
            <person name="Cittone H."/>
            <person name="Clark E.B."/>
            <person name="Cotton M.D."/>
            <person name="Utterback T.R."/>
            <person name="Khouri H.M."/>
            <person name="Qin H."/>
            <person name="Vamathevan J.J."/>
            <person name="Gill J."/>
            <person name="Scarlato V."/>
            <person name="Masignani V."/>
            <person name="Pizza M."/>
            <person name="Grandi G."/>
            <person name="Sun L."/>
            <person name="Smith H.O."/>
            <person name="Fraser C.M."/>
            <person name="Moxon E.R."/>
            <person name="Rappuoli R."/>
            <person name="Venter J.C."/>
        </authorList>
    </citation>
    <scope>NUCLEOTIDE SEQUENCE [LARGE SCALE GENOMIC DNA]</scope>
    <source>
        <strain>ATCC BAA-335 / MC58</strain>
    </source>
</reference>
<reference key="2">
    <citation type="journal article" date="2005" name="Hum. Vaccin.">
        <title>Characterization of the protein content of a meningococcal outer membrane vesicle vaccine by polyacrylamide gel electrophoresis and mass spectrometry.</title>
        <authorList>
            <person name="Vipond C."/>
            <person name="Wheeler J.X."/>
            <person name="Jones C."/>
            <person name="Feavers I.M."/>
            <person name="Suker J."/>
        </authorList>
    </citation>
    <scope>IDENTIFICATION BY MASS SPECTROMETRY [LARGE SCALE ANALYSIS]</scope>
</reference>
<protein>
    <recommendedName>
        <fullName>Phosphoenolpyruvate synthase</fullName>
        <shortName>PEP synthase</shortName>
        <ecNumber>2.7.9.2</ecNumber>
    </recommendedName>
    <alternativeName>
        <fullName>Pyruvate, water dikinase</fullName>
    </alternativeName>
</protein>
<gene>
    <name type="primary">ppsA</name>
    <name type="ordered locus">NMB0618</name>
</gene>
<evidence type="ECO:0000250" key="1"/>
<evidence type="ECO:0000305" key="2"/>
<evidence type="ECO:0007829" key="3">
    <source>
        <dbReference type="PDB" id="2OLS"/>
    </source>
</evidence>